<evidence type="ECO:0000255" key="1">
    <source>
        <dbReference type="HAMAP-Rule" id="MF_00260"/>
    </source>
</evidence>
<comment type="function">
    <text evidence="1">Tetrapolymerization of the monopyrrole PBG into the hydroxymethylbilane pre-uroporphyrinogen in several discrete steps.</text>
</comment>
<comment type="catalytic activity">
    <reaction evidence="1">
        <text>4 porphobilinogen + H2O = hydroxymethylbilane + 4 NH4(+)</text>
        <dbReference type="Rhea" id="RHEA:13185"/>
        <dbReference type="ChEBI" id="CHEBI:15377"/>
        <dbReference type="ChEBI" id="CHEBI:28938"/>
        <dbReference type="ChEBI" id="CHEBI:57845"/>
        <dbReference type="ChEBI" id="CHEBI:58126"/>
        <dbReference type="EC" id="2.5.1.61"/>
    </reaction>
</comment>
<comment type="cofactor">
    <cofactor evidence="1">
        <name>dipyrromethane</name>
        <dbReference type="ChEBI" id="CHEBI:60342"/>
    </cofactor>
    <text evidence="1">Binds 1 dipyrromethane group covalently.</text>
</comment>
<comment type="pathway">
    <text evidence="1">Porphyrin-containing compound metabolism; protoporphyrin-IX biosynthesis; coproporphyrinogen-III from 5-aminolevulinate: step 2/4.</text>
</comment>
<comment type="subunit">
    <text evidence="1">Monomer.</text>
</comment>
<comment type="miscellaneous">
    <text evidence="1">The porphobilinogen subunits are added to the dipyrromethane group.</text>
</comment>
<comment type="similarity">
    <text evidence="1">Belongs to the HMBS family.</text>
</comment>
<proteinExistence type="inferred from homology"/>
<sequence>MSAKIIRIATRQSPLALWQANHVREMLVKQWPNLSIELLPMITSGDRFLKDKLLSAGGKGLFVKELEEALLDKRADLAVHSTKDMPAQLPDGLSLAAICKRDNPFDALISPQFKSLDALPKNAIIGTSSLRRQSQLLAYNPNLQVKTLRGNIHTRLSKLESGEYQAIILAAAGLERMGLAHHITQLIPDDIMLPTCAQGALCIECRTDDLEIQELIYGLNDPISALCVHTERRVNAKLGGNCHIPFAVYCTITAENLLLLRAKVLNLDGSQMIDDEQQGKIEEAEIIADRCTESLMTKGAMTLLSTIPS</sequence>
<accession>Q5WT65</accession>
<name>HEM3_LEGPL</name>
<keyword id="KW-0627">Porphyrin biosynthesis</keyword>
<keyword id="KW-0808">Transferase</keyword>
<organism>
    <name type="scientific">Legionella pneumophila (strain Lens)</name>
    <dbReference type="NCBI Taxonomy" id="297245"/>
    <lineage>
        <taxon>Bacteria</taxon>
        <taxon>Pseudomonadati</taxon>
        <taxon>Pseudomonadota</taxon>
        <taxon>Gammaproteobacteria</taxon>
        <taxon>Legionellales</taxon>
        <taxon>Legionellaceae</taxon>
        <taxon>Legionella</taxon>
    </lineage>
</organism>
<dbReference type="EC" id="2.5.1.61" evidence="1"/>
<dbReference type="EMBL" id="CR628337">
    <property type="protein sequence ID" value="CAH16901.1"/>
    <property type="molecule type" value="Genomic_DNA"/>
</dbReference>
<dbReference type="RefSeq" id="WP_011216595.1">
    <property type="nucleotide sequence ID" value="NC_006369.1"/>
</dbReference>
<dbReference type="SMR" id="Q5WT65"/>
<dbReference type="KEGG" id="lpf:lpl2660"/>
<dbReference type="LegioList" id="lpl2660"/>
<dbReference type="HOGENOM" id="CLU_019704_0_2_6"/>
<dbReference type="UniPathway" id="UPA00251">
    <property type="reaction ID" value="UER00319"/>
</dbReference>
<dbReference type="Proteomes" id="UP000002517">
    <property type="component" value="Chromosome"/>
</dbReference>
<dbReference type="GO" id="GO:0005737">
    <property type="term" value="C:cytoplasm"/>
    <property type="evidence" value="ECO:0007669"/>
    <property type="project" value="TreeGrafter"/>
</dbReference>
<dbReference type="GO" id="GO:0004418">
    <property type="term" value="F:hydroxymethylbilane synthase activity"/>
    <property type="evidence" value="ECO:0007669"/>
    <property type="project" value="UniProtKB-UniRule"/>
</dbReference>
<dbReference type="GO" id="GO:0006782">
    <property type="term" value="P:protoporphyrinogen IX biosynthetic process"/>
    <property type="evidence" value="ECO:0007669"/>
    <property type="project" value="UniProtKB-UniRule"/>
</dbReference>
<dbReference type="CDD" id="cd13646">
    <property type="entry name" value="PBP2_EcHMBS_like"/>
    <property type="match status" value="1"/>
</dbReference>
<dbReference type="FunFam" id="3.40.190.10:FF:000004">
    <property type="entry name" value="Porphobilinogen deaminase"/>
    <property type="match status" value="1"/>
</dbReference>
<dbReference type="FunFam" id="3.40.190.10:FF:000005">
    <property type="entry name" value="Porphobilinogen deaminase"/>
    <property type="match status" value="1"/>
</dbReference>
<dbReference type="Gene3D" id="3.40.190.10">
    <property type="entry name" value="Periplasmic binding protein-like II"/>
    <property type="match status" value="2"/>
</dbReference>
<dbReference type="Gene3D" id="3.30.160.40">
    <property type="entry name" value="Porphobilinogen deaminase, C-terminal domain"/>
    <property type="match status" value="1"/>
</dbReference>
<dbReference type="HAMAP" id="MF_00260">
    <property type="entry name" value="Porphobil_deam"/>
    <property type="match status" value="1"/>
</dbReference>
<dbReference type="InterPro" id="IPR000860">
    <property type="entry name" value="HemC"/>
</dbReference>
<dbReference type="InterPro" id="IPR022419">
    <property type="entry name" value="Porphobilin_deaminase_cofac_BS"/>
</dbReference>
<dbReference type="InterPro" id="IPR022417">
    <property type="entry name" value="Porphobilin_deaminase_N"/>
</dbReference>
<dbReference type="InterPro" id="IPR022418">
    <property type="entry name" value="Porphobilinogen_deaminase_C"/>
</dbReference>
<dbReference type="InterPro" id="IPR036803">
    <property type="entry name" value="Porphobilinogen_deaminase_C_sf"/>
</dbReference>
<dbReference type="NCBIfam" id="TIGR00212">
    <property type="entry name" value="hemC"/>
    <property type="match status" value="1"/>
</dbReference>
<dbReference type="PANTHER" id="PTHR11557">
    <property type="entry name" value="PORPHOBILINOGEN DEAMINASE"/>
    <property type="match status" value="1"/>
</dbReference>
<dbReference type="PANTHER" id="PTHR11557:SF0">
    <property type="entry name" value="PORPHOBILINOGEN DEAMINASE"/>
    <property type="match status" value="1"/>
</dbReference>
<dbReference type="Pfam" id="PF01379">
    <property type="entry name" value="Porphobil_deam"/>
    <property type="match status" value="1"/>
</dbReference>
<dbReference type="Pfam" id="PF03900">
    <property type="entry name" value="Porphobil_deamC"/>
    <property type="match status" value="1"/>
</dbReference>
<dbReference type="PIRSF" id="PIRSF001438">
    <property type="entry name" value="4pyrrol_synth_OHMeBilane_synth"/>
    <property type="match status" value="1"/>
</dbReference>
<dbReference type="PRINTS" id="PR00151">
    <property type="entry name" value="PORPHBDMNASE"/>
</dbReference>
<dbReference type="SUPFAM" id="SSF53850">
    <property type="entry name" value="Periplasmic binding protein-like II"/>
    <property type="match status" value="1"/>
</dbReference>
<dbReference type="SUPFAM" id="SSF54782">
    <property type="entry name" value="Porphobilinogen deaminase (hydroxymethylbilane synthase), C-terminal domain"/>
    <property type="match status" value="1"/>
</dbReference>
<dbReference type="PROSITE" id="PS00533">
    <property type="entry name" value="PORPHOBILINOGEN_DEAM"/>
    <property type="match status" value="1"/>
</dbReference>
<feature type="chain" id="PRO_0000142950" description="Porphobilinogen deaminase">
    <location>
        <begin position="1"/>
        <end position="309"/>
    </location>
</feature>
<feature type="modified residue" description="S-(dipyrrolylmethanemethyl)cysteine" evidence="1">
    <location>
        <position position="242"/>
    </location>
</feature>
<protein>
    <recommendedName>
        <fullName evidence="1">Porphobilinogen deaminase</fullName>
        <shortName evidence="1">PBG</shortName>
        <ecNumber evidence="1">2.5.1.61</ecNumber>
    </recommendedName>
    <alternativeName>
        <fullName evidence="1">Hydroxymethylbilane synthase</fullName>
        <shortName evidence="1">HMBS</shortName>
    </alternativeName>
    <alternativeName>
        <fullName evidence="1">Pre-uroporphyrinogen synthase</fullName>
    </alternativeName>
</protein>
<gene>
    <name evidence="1" type="primary">hemC</name>
    <name type="ordered locus">lpl2660</name>
</gene>
<reference key="1">
    <citation type="journal article" date="2004" name="Nat. Genet.">
        <title>Evidence in the Legionella pneumophila genome for exploitation of host cell functions and high genome plasticity.</title>
        <authorList>
            <person name="Cazalet C."/>
            <person name="Rusniok C."/>
            <person name="Brueggemann H."/>
            <person name="Zidane N."/>
            <person name="Magnier A."/>
            <person name="Ma L."/>
            <person name="Tichit M."/>
            <person name="Jarraud S."/>
            <person name="Bouchier C."/>
            <person name="Vandenesch F."/>
            <person name="Kunst F."/>
            <person name="Etienne J."/>
            <person name="Glaser P."/>
            <person name="Buchrieser C."/>
        </authorList>
    </citation>
    <scope>NUCLEOTIDE SEQUENCE [LARGE SCALE GENOMIC DNA]</scope>
    <source>
        <strain>Lens</strain>
    </source>
</reference>